<name>ARE2_YEAST</name>
<accession>P53629</accession>
<accession>D6W1J4</accession>
<accession>Q12673</accession>
<feature type="chain" id="PRO_0000207651" description="Sterol O-acyltransferase 2">
    <location>
        <begin position="1"/>
        <end position="642"/>
    </location>
</feature>
<feature type="transmembrane region" description="Helical" evidence="2">
    <location>
        <begin position="215"/>
        <end position="235"/>
    </location>
</feature>
<feature type="transmembrane region" description="Helical" evidence="2">
    <location>
        <begin position="292"/>
        <end position="312"/>
    </location>
</feature>
<feature type="transmembrane region" description="Helical" evidence="2">
    <location>
        <begin position="404"/>
        <end position="424"/>
    </location>
</feature>
<feature type="transmembrane region" description="Helical" evidence="2">
    <location>
        <begin position="442"/>
        <end position="462"/>
    </location>
</feature>
<feature type="transmembrane region" description="Helical" evidence="2">
    <location>
        <begin position="485"/>
        <end position="505"/>
    </location>
</feature>
<feature type="transmembrane region" description="Helical" evidence="2">
    <location>
        <begin position="567"/>
        <end position="587"/>
    </location>
</feature>
<feature type="transmembrane region" description="Helical" evidence="2">
    <location>
        <begin position="622"/>
        <end position="642"/>
    </location>
</feature>
<feature type="region of interest" description="Disordered" evidence="3">
    <location>
        <begin position="174"/>
        <end position="194"/>
    </location>
</feature>
<feature type="short sequence motif" description="FYXDWWN motif" evidence="1">
    <location>
        <begin position="523"/>
        <end position="529"/>
    </location>
</feature>
<feature type="active site" evidence="1">
    <location>
        <position position="579"/>
    </location>
</feature>
<feature type="modified residue" description="Phosphoserine" evidence="9 10">
    <location>
        <position position="175"/>
    </location>
</feature>
<feature type="modified residue" description="Phosphoserine" evidence="10">
    <location>
        <position position="176"/>
    </location>
</feature>
<feature type="sequence conflict" description="In Ref. 2; AAC49441." evidence="8" ref="2">
    <original>G</original>
    <variation>D</variation>
    <location>
        <position position="80"/>
    </location>
</feature>
<feature type="sequence conflict" description="In Ref. 2; AAC49441." evidence="8" ref="2">
    <original>G</original>
    <variation>E</variation>
    <location>
        <position position="184"/>
    </location>
</feature>
<feature type="sequence conflict" description="In Ref. 2; AAC49441." evidence="8" ref="2">
    <original>I</original>
    <variation>L</variation>
    <location>
        <position position="211"/>
    </location>
</feature>
<feature type="sequence conflict" description="In Ref. 2; AAC49441." evidence="8" ref="2">
    <original>F</original>
    <variation>S</variation>
    <location>
        <position position="612"/>
    </location>
</feature>
<keyword id="KW-0012">Acyltransferase</keyword>
<keyword id="KW-0256">Endoplasmic reticulum</keyword>
<keyword id="KW-0472">Membrane</keyword>
<keyword id="KW-0597">Phosphoprotein</keyword>
<keyword id="KW-1185">Reference proteome</keyword>
<keyword id="KW-0808">Transferase</keyword>
<keyword id="KW-0812">Transmembrane</keyword>
<keyword id="KW-1133">Transmembrane helix</keyword>
<organism>
    <name type="scientific">Saccharomyces cerevisiae (strain ATCC 204508 / S288c)</name>
    <name type="common">Baker's yeast</name>
    <dbReference type="NCBI Taxonomy" id="559292"/>
    <lineage>
        <taxon>Eukaryota</taxon>
        <taxon>Fungi</taxon>
        <taxon>Dikarya</taxon>
        <taxon>Ascomycota</taxon>
        <taxon>Saccharomycotina</taxon>
        <taxon>Saccharomycetes</taxon>
        <taxon>Saccharomycetales</taxon>
        <taxon>Saccharomycetaceae</taxon>
        <taxon>Saccharomyces</taxon>
    </lineage>
</organism>
<comment type="function">
    <text evidence="4 6">Sterol O-acyltransferase that catalyzes the formation of stery esters.</text>
</comment>
<comment type="catalytic activity">
    <reaction evidence="4">
        <text>ergosterol + an acyl-CoA = ergosteryl ester + CoA</text>
        <dbReference type="Rhea" id="RHEA:33483"/>
        <dbReference type="ChEBI" id="CHEBI:16933"/>
        <dbReference type="ChEBI" id="CHEBI:52320"/>
        <dbReference type="ChEBI" id="CHEBI:57287"/>
        <dbReference type="ChEBI" id="CHEBI:58342"/>
    </reaction>
    <physiologicalReaction direction="left-to-right" evidence="4">
        <dbReference type="Rhea" id="RHEA:33484"/>
    </physiologicalReaction>
</comment>
<comment type="catalytic activity">
    <reaction evidence="4">
        <text>zymosterol + an acyl-CoA = zymosterol ester + CoA</text>
        <dbReference type="Rhea" id="RHEA:41476"/>
        <dbReference type="ChEBI" id="CHEBI:18252"/>
        <dbReference type="ChEBI" id="CHEBI:52322"/>
        <dbReference type="ChEBI" id="CHEBI:57287"/>
        <dbReference type="ChEBI" id="CHEBI:58342"/>
    </reaction>
    <physiologicalReaction direction="left-to-right" evidence="4">
        <dbReference type="Rhea" id="RHEA:41477"/>
    </physiologicalReaction>
</comment>
<comment type="subcellular location">
    <subcellularLocation>
        <location evidence="4">Endoplasmic reticulum membrane</location>
        <topology evidence="2">Multi-pass membrane protein</topology>
    </subcellularLocation>
</comment>
<comment type="miscellaneous">
    <text evidence="5">Present with 279 molecules/cell in log phase SD medium.</text>
</comment>
<comment type="similarity">
    <text evidence="8">Belongs to the membrane-bound acyltransferase family. Sterol o-acyltransferase subfamily.</text>
</comment>
<gene>
    <name evidence="7" type="primary">ARE2</name>
    <name type="synonym">SAT1</name>
    <name type="ordered locus">YNR019W</name>
    <name type="ORF">N3206</name>
</gene>
<dbReference type="EC" id="2.3.1.-" evidence="4"/>
<dbReference type="EMBL" id="U51790">
    <property type="protein sequence ID" value="AAB02203.1"/>
    <property type="molecule type" value="Genomic_DNA"/>
</dbReference>
<dbReference type="EMBL" id="U55383">
    <property type="protein sequence ID" value="AAC49441.1"/>
    <property type="molecule type" value="Genomic_DNA"/>
</dbReference>
<dbReference type="EMBL" id="Z71634">
    <property type="protein sequence ID" value="CAA96298.1"/>
    <property type="molecule type" value="Genomic_DNA"/>
</dbReference>
<dbReference type="EMBL" id="BK006947">
    <property type="protein sequence ID" value="DAA10560.1"/>
    <property type="molecule type" value="Genomic_DNA"/>
</dbReference>
<dbReference type="PIR" id="S63350">
    <property type="entry name" value="S63350"/>
</dbReference>
<dbReference type="RefSeq" id="NP_014416.1">
    <property type="nucleotide sequence ID" value="NM_001183196.1"/>
</dbReference>
<dbReference type="SMR" id="P53629"/>
<dbReference type="BioGRID" id="35844">
    <property type="interactions" value="162"/>
</dbReference>
<dbReference type="DIP" id="DIP-4050N"/>
<dbReference type="FunCoup" id="P53629">
    <property type="interactions" value="242"/>
</dbReference>
<dbReference type="IntAct" id="P53629">
    <property type="interactions" value="11"/>
</dbReference>
<dbReference type="MINT" id="P53629"/>
<dbReference type="STRING" id="4932.YNR019W"/>
<dbReference type="SwissLipids" id="SLP:000000707"/>
<dbReference type="SwissLipids" id="SLP:000000708"/>
<dbReference type="iPTMnet" id="P53629"/>
<dbReference type="PaxDb" id="4932-YNR019W"/>
<dbReference type="PeptideAtlas" id="P53629"/>
<dbReference type="EnsemblFungi" id="YNR019W_mRNA">
    <property type="protein sequence ID" value="YNR019W"/>
    <property type="gene ID" value="YNR019W"/>
</dbReference>
<dbReference type="GeneID" id="855753"/>
<dbReference type="KEGG" id="sce:YNR019W"/>
<dbReference type="AGR" id="SGD:S000005302"/>
<dbReference type="SGD" id="S000005302">
    <property type="gene designation" value="ARE2"/>
</dbReference>
<dbReference type="VEuPathDB" id="FungiDB:YNR019W"/>
<dbReference type="eggNOG" id="KOG0380">
    <property type="taxonomic scope" value="Eukaryota"/>
</dbReference>
<dbReference type="GeneTree" id="ENSGT00950000183081"/>
<dbReference type="HOGENOM" id="CLU_018190_2_1_1"/>
<dbReference type="InParanoid" id="P53629"/>
<dbReference type="OMA" id="INWWYVA"/>
<dbReference type="OrthoDB" id="10039049at2759"/>
<dbReference type="BioCyc" id="MetaCyc:YNR019W-MONOMER"/>
<dbReference type="BioCyc" id="YEAST:YNR019W-MONOMER"/>
<dbReference type="BRENDA" id="2.3.1.26">
    <property type="organism ID" value="984"/>
</dbReference>
<dbReference type="BioGRID-ORCS" id="855753">
    <property type="hits" value="0 hits in 10 CRISPR screens"/>
</dbReference>
<dbReference type="PRO" id="PR:P53629"/>
<dbReference type="Proteomes" id="UP000002311">
    <property type="component" value="Chromosome XIV"/>
</dbReference>
<dbReference type="RNAct" id="P53629">
    <property type="molecule type" value="protein"/>
</dbReference>
<dbReference type="GO" id="GO:0005783">
    <property type="term" value="C:endoplasmic reticulum"/>
    <property type="evidence" value="ECO:0000314"/>
    <property type="project" value="SGD"/>
</dbReference>
<dbReference type="GO" id="GO:0005789">
    <property type="term" value="C:endoplasmic reticulum membrane"/>
    <property type="evidence" value="ECO:0000318"/>
    <property type="project" value="GO_Central"/>
</dbReference>
<dbReference type="GO" id="GO:0034737">
    <property type="term" value="F:ergosterol O-acyltransferase activity"/>
    <property type="evidence" value="ECO:0000315"/>
    <property type="project" value="SGD"/>
</dbReference>
<dbReference type="GO" id="GO:0008204">
    <property type="term" value="P:ergosterol metabolic process"/>
    <property type="evidence" value="ECO:0000315"/>
    <property type="project" value="SGD"/>
</dbReference>
<dbReference type="InterPro" id="IPR004299">
    <property type="entry name" value="MBOAT_fam"/>
</dbReference>
<dbReference type="InterPro" id="IPR014371">
    <property type="entry name" value="Oat_ACAT_DAG_ARE"/>
</dbReference>
<dbReference type="PANTHER" id="PTHR10408">
    <property type="entry name" value="STEROL O-ACYLTRANSFERASE"/>
    <property type="match status" value="1"/>
</dbReference>
<dbReference type="PANTHER" id="PTHR10408:SF23">
    <property type="entry name" value="STEROL O-ACYLTRANSFERASE 1-RELATED"/>
    <property type="match status" value="1"/>
</dbReference>
<dbReference type="Pfam" id="PF03062">
    <property type="entry name" value="MBOAT"/>
    <property type="match status" value="1"/>
</dbReference>
<dbReference type="PIRSF" id="PIRSF000439">
    <property type="entry name" value="Oat_ACAT_DAG_ARE"/>
    <property type="match status" value="1"/>
</dbReference>
<reference key="1">
    <citation type="journal article" date="1996" name="Science">
        <title>Sterol esterification in yeast: a two-gene process.</title>
        <authorList>
            <person name="Yang H."/>
            <person name="Bard M."/>
            <person name="Bruner D.A."/>
            <person name="Gleeson A."/>
            <person name="Deckelbaum R.J."/>
            <person name="Aljinovic G."/>
            <person name="Pohl T.M."/>
            <person name="Rothstein R."/>
            <person name="Sturley S.L."/>
        </authorList>
    </citation>
    <scope>NUCLEOTIDE SEQUENCE [GENOMIC DNA]</scope>
    <scope>FUNCTION</scope>
</reference>
<reference key="2">
    <citation type="journal article" date="1996" name="J. Biol. Chem.">
        <title>Molecular cloning and characterization of two isoforms of Saccharomyces cerevisiae acyl-CoA:sterol acyltransferase.</title>
        <authorList>
            <person name="Yu C."/>
            <person name="Kennedy N.J."/>
            <person name="Chang C.C.Y."/>
            <person name="Rothblatt J.A."/>
        </authorList>
    </citation>
    <scope>NUCLEOTIDE SEQUENCE [GENOMIC DNA]</scope>
    <source>
        <strain>S288c / SNY243</strain>
    </source>
</reference>
<reference key="3">
    <citation type="journal article" date="1997" name="Nature">
        <title>The nucleotide sequence of Saccharomyces cerevisiae chromosome XIV and its evolutionary implications.</title>
        <authorList>
            <person name="Philippsen P."/>
            <person name="Kleine K."/>
            <person name="Poehlmann R."/>
            <person name="Duesterhoeft A."/>
            <person name="Hamberg K."/>
            <person name="Hegemann J.H."/>
            <person name="Obermaier B."/>
            <person name="Urrestarazu L.A."/>
            <person name="Aert R."/>
            <person name="Albermann K."/>
            <person name="Altmann R."/>
            <person name="Andre B."/>
            <person name="Baladron V."/>
            <person name="Ballesta J.P.G."/>
            <person name="Becam A.-M."/>
            <person name="Beinhauer J.D."/>
            <person name="Boskovic J."/>
            <person name="Buitrago M.J."/>
            <person name="Bussereau F."/>
            <person name="Coster F."/>
            <person name="Crouzet M."/>
            <person name="D'Angelo M."/>
            <person name="Dal Pero F."/>
            <person name="De Antoni A."/>
            <person name="del Rey F."/>
            <person name="Doignon F."/>
            <person name="Domdey H."/>
            <person name="Dubois E."/>
            <person name="Fiedler T.A."/>
            <person name="Fleig U."/>
            <person name="Floeth M."/>
            <person name="Fritz C."/>
            <person name="Gaillardin C."/>
            <person name="Garcia-Cantalejo J.M."/>
            <person name="Glansdorff N."/>
            <person name="Goffeau A."/>
            <person name="Gueldener U."/>
            <person name="Herbert C.J."/>
            <person name="Heumann K."/>
            <person name="Heuss-Neitzel D."/>
            <person name="Hilbert H."/>
            <person name="Hinni K."/>
            <person name="Iraqui Houssaini I."/>
            <person name="Jacquet M."/>
            <person name="Jimenez A."/>
            <person name="Jonniaux J.-L."/>
            <person name="Karpfinger-Hartl L."/>
            <person name="Lanfranchi G."/>
            <person name="Lepingle A."/>
            <person name="Levesque H."/>
            <person name="Lyck R."/>
            <person name="Maftahi M."/>
            <person name="Mallet L."/>
            <person name="Maurer C.T.C."/>
            <person name="Messenguy F."/>
            <person name="Mewes H.-W."/>
            <person name="Moestl D."/>
            <person name="Nasr F."/>
            <person name="Nicaud J.-M."/>
            <person name="Niedenthal R.K."/>
            <person name="Pandolfo D."/>
            <person name="Pierard A."/>
            <person name="Piravandi E."/>
            <person name="Planta R.J."/>
            <person name="Pohl T.M."/>
            <person name="Purnelle B."/>
            <person name="Rebischung C."/>
            <person name="Remacha M.A."/>
            <person name="Revuelta J.L."/>
            <person name="Rinke M."/>
            <person name="Saiz J.E."/>
            <person name="Sartorello F."/>
            <person name="Scherens B."/>
            <person name="Sen-Gupta M."/>
            <person name="Soler-Mira A."/>
            <person name="Urbanus J.H.M."/>
            <person name="Valle G."/>
            <person name="Van Dyck L."/>
            <person name="Verhasselt P."/>
            <person name="Vierendeels F."/>
            <person name="Vissers S."/>
            <person name="Voet M."/>
            <person name="Volckaert G."/>
            <person name="Wach A."/>
            <person name="Wambutt R."/>
            <person name="Wedler H."/>
            <person name="Zollner A."/>
            <person name="Hani J."/>
        </authorList>
    </citation>
    <scope>NUCLEOTIDE SEQUENCE [LARGE SCALE GENOMIC DNA]</scope>
    <source>
        <strain>ATCC 204508 / S288c</strain>
    </source>
</reference>
<reference key="4">
    <citation type="journal article" date="2014" name="G3 (Bethesda)">
        <title>The reference genome sequence of Saccharomyces cerevisiae: Then and now.</title>
        <authorList>
            <person name="Engel S.R."/>
            <person name="Dietrich F.S."/>
            <person name="Fisk D.G."/>
            <person name="Binkley G."/>
            <person name="Balakrishnan R."/>
            <person name="Costanzo M.C."/>
            <person name="Dwight S.S."/>
            <person name="Hitz B.C."/>
            <person name="Karra K."/>
            <person name="Nash R.S."/>
            <person name="Weng S."/>
            <person name="Wong E.D."/>
            <person name="Lloyd P."/>
            <person name="Skrzypek M.S."/>
            <person name="Miyasato S.R."/>
            <person name="Simison M."/>
            <person name="Cherry J.M."/>
        </authorList>
    </citation>
    <scope>GENOME REANNOTATION</scope>
    <source>
        <strain>ATCC 204508 / S288c</strain>
    </source>
</reference>
<reference key="5">
    <citation type="journal article" date="2000" name="Eur. J. Biochem.">
        <title>Contribution of Are1p and Are2p to steryl ester synthesis in the yeast Saccharomyces cerevisiae.</title>
        <authorList>
            <person name="Zweytick D."/>
            <person name="Leitner E."/>
            <person name="Kohlwein S.D."/>
            <person name="Yu C."/>
            <person name="Rothblatt J."/>
            <person name="Daum G."/>
        </authorList>
    </citation>
    <scope>FUNCTION</scope>
    <scope>CATALYTIC ACTIVITY</scope>
    <scope>SUBCELLULAR LOCATION</scope>
</reference>
<reference key="6">
    <citation type="journal article" date="2003" name="Nature">
        <title>Global analysis of protein expression in yeast.</title>
        <authorList>
            <person name="Ghaemmaghami S."/>
            <person name="Huh W.-K."/>
            <person name="Bower K."/>
            <person name="Howson R.W."/>
            <person name="Belle A."/>
            <person name="Dephoure N."/>
            <person name="O'Shea E.K."/>
            <person name="Weissman J.S."/>
        </authorList>
    </citation>
    <scope>LEVEL OF PROTEIN EXPRESSION [LARGE SCALE ANALYSIS]</scope>
</reference>
<reference key="7">
    <citation type="journal article" date="2007" name="J. Proteome Res.">
        <title>Large-scale phosphorylation analysis of alpha-factor-arrested Saccharomyces cerevisiae.</title>
        <authorList>
            <person name="Li X."/>
            <person name="Gerber S.A."/>
            <person name="Rudner A.D."/>
            <person name="Beausoleil S.A."/>
            <person name="Haas W."/>
            <person name="Villen J."/>
            <person name="Elias J.E."/>
            <person name="Gygi S.P."/>
        </authorList>
    </citation>
    <scope>PHOSPHORYLATION [LARGE SCALE ANALYSIS] AT SER-175</scope>
    <scope>IDENTIFICATION BY MASS SPECTROMETRY [LARGE SCALE ANALYSIS]</scope>
    <source>
        <strain>ADR376</strain>
    </source>
</reference>
<reference key="8">
    <citation type="journal article" date="2007" name="Proc. Natl. Acad. Sci. U.S.A.">
        <title>Analysis of phosphorylation sites on proteins from Saccharomyces cerevisiae by electron transfer dissociation (ETD) mass spectrometry.</title>
        <authorList>
            <person name="Chi A."/>
            <person name="Huttenhower C."/>
            <person name="Geer L.Y."/>
            <person name="Coon J.J."/>
            <person name="Syka J.E.P."/>
            <person name="Bai D.L."/>
            <person name="Shabanowitz J."/>
            <person name="Burke D.J."/>
            <person name="Troyanskaya O.G."/>
            <person name="Hunt D.F."/>
        </authorList>
    </citation>
    <scope>IDENTIFICATION BY MASS SPECTROMETRY [LARGE SCALE ANALYSIS]</scope>
</reference>
<reference key="9">
    <citation type="journal article" date="2008" name="Mol. Cell. Proteomics">
        <title>A multidimensional chromatography technology for in-depth phosphoproteome analysis.</title>
        <authorList>
            <person name="Albuquerque C.P."/>
            <person name="Smolka M.B."/>
            <person name="Payne S.H."/>
            <person name="Bafna V."/>
            <person name="Eng J."/>
            <person name="Zhou H."/>
        </authorList>
    </citation>
    <scope>IDENTIFICATION BY MASS SPECTROMETRY [LARGE SCALE ANALYSIS]</scope>
</reference>
<reference key="10">
    <citation type="journal article" date="2009" name="Science">
        <title>Global analysis of Cdk1 substrate phosphorylation sites provides insights into evolution.</title>
        <authorList>
            <person name="Holt L.J."/>
            <person name="Tuch B.B."/>
            <person name="Villen J."/>
            <person name="Johnson A.D."/>
            <person name="Gygi S.P."/>
            <person name="Morgan D.O."/>
        </authorList>
    </citation>
    <scope>PHOSPHORYLATION [LARGE SCALE ANALYSIS] AT SER-175 AND SER-176</scope>
    <scope>IDENTIFICATION BY MASS SPECTROMETRY [LARGE SCALE ANALYSIS]</scope>
</reference>
<reference key="11">
    <citation type="journal article" date="2012" name="Proc. Natl. Acad. Sci. U.S.A.">
        <title>N-terminal acetylome analyses and functional insights of the N-terminal acetyltransferase NatB.</title>
        <authorList>
            <person name="Van Damme P."/>
            <person name="Lasa M."/>
            <person name="Polevoda B."/>
            <person name="Gazquez C."/>
            <person name="Elosegui-Artola A."/>
            <person name="Kim D.S."/>
            <person name="De Juan-Pardo E."/>
            <person name="Demeyer K."/>
            <person name="Hole K."/>
            <person name="Larrea E."/>
            <person name="Timmerman E."/>
            <person name="Prieto J."/>
            <person name="Arnesen T."/>
            <person name="Sherman F."/>
            <person name="Gevaert K."/>
            <person name="Aldabe R."/>
        </authorList>
    </citation>
    <scope>IDENTIFICATION BY MASS SPECTROMETRY [LARGE SCALE ANALYSIS]</scope>
</reference>
<proteinExistence type="evidence at protein level"/>
<sequence>MDKKKDLLENEQFLRIQKLNAADAGKRQSITVDDEGELYGLDTSGNSPANEHTATTITQNHSVVASNGDVAFIPGTATEGNTEIVTEEVIETDDNMFKTHVKTLSSKEKARYRQGSSNFISYFDDMSFEHRPSILDGSVNEPFKTKFVGPTLEKEIRRREKELMAMRKNLHHRKSSPDAVDSVGKNDGAAPTTVPTAATSETVVTVETTIISSNFSGLYVAFWMAIAFGAVKALIDYYYQHNGSFKDSEILKFMTTNLFTVASVDLLMYLSTYFVVGIQYLCKWGVLKWGTTGWIFTSIYEFLFVIFYMYLTENILKLHWLSKIFLFLHSLVLLMKMHSFAFYNGYLWGIKEELQFSKSALAKYKDSINDPKVIGALEKSCEFCSFELSSQSLSDQTQKFPNNISAKSFFWFTMFPTLIYQIEYPRTKEIRWSYVLEKICAIFGTIFLMMIDAQILMYPVAMRALAVRNSEWTGILDRLLKWVGLLVDIVPGFIVMYILDFYLIWDAILNCVAELTRFGDRYFYGDWWNCVSWADFSRIWNIPVHKFLLRHVYHSSMSSFKLNKSQATLMTFFLSSVVHELAMYVIFKKLRFYLFFFQMLQMPLVALTNTKFMRNRTIIGNVIFWLGICMGPSVMCTLYLTF</sequence>
<evidence type="ECO:0000250" key="1">
    <source>
        <dbReference type="UniProtKB" id="P35610"/>
    </source>
</evidence>
<evidence type="ECO:0000255" key="2"/>
<evidence type="ECO:0000256" key="3">
    <source>
        <dbReference type="SAM" id="MobiDB-lite"/>
    </source>
</evidence>
<evidence type="ECO:0000269" key="4">
    <source>
    </source>
</evidence>
<evidence type="ECO:0000269" key="5">
    <source>
    </source>
</evidence>
<evidence type="ECO:0000269" key="6">
    <source>
    </source>
</evidence>
<evidence type="ECO:0000303" key="7">
    <source>
    </source>
</evidence>
<evidence type="ECO:0000305" key="8"/>
<evidence type="ECO:0007744" key="9">
    <source>
    </source>
</evidence>
<evidence type="ECO:0007744" key="10">
    <source>
    </source>
</evidence>
<protein>
    <recommendedName>
        <fullName>Sterol O-acyltransferase 2</fullName>
        <ecNumber evidence="4">2.3.1.-</ecNumber>
    </recommendedName>
    <alternativeName>
        <fullName>Sterol-ester synthase 2</fullName>
    </alternativeName>
</protein>